<evidence type="ECO:0000250" key="1">
    <source>
        <dbReference type="UniProtKB" id="Q7SY10"/>
    </source>
</evidence>
<evidence type="ECO:0000250" key="2">
    <source>
        <dbReference type="UniProtKB" id="Q8C2L6"/>
    </source>
</evidence>
<evidence type="ECO:0000255" key="3"/>
<evidence type="ECO:0000303" key="4">
    <source>
    </source>
</evidence>
<evidence type="ECO:0000303" key="5">
    <source>
    </source>
</evidence>
<evidence type="ECO:0000305" key="6"/>
<reference key="1">
    <citation type="journal article" date="2003" name="Genome Res.">
        <title>The secreted protein discovery initiative (SPDI), a large-scale effort to identify novel human secreted and transmembrane proteins: a bioinformatics assessment.</title>
        <authorList>
            <person name="Clark H.F."/>
            <person name="Gurney A.L."/>
            <person name="Abaya E."/>
            <person name="Baker K."/>
            <person name="Baldwin D.T."/>
            <person name="Brush J."/>
            <person name="Chen J."/>
            <person name="Chow B."/>
            <person name="Chui C."/>
            <person name="Crowley C."/>
            <person name="Currell B."/>
            <person name="Deuel B."/>
            <person name="Dowd P."/>
            <person name="Eaton D."/>
            <person name="Foster J.S."/>
            <person name="Grimaldi C."/>
            <person name="Gu Q."/>
            <person name="Hass P.E."/>
            <person name="Heldens S."/>
            <person name="Huang A."/>
            <person name="Kim H.S."/>
            <person name="Klimowski L."/>
            <person name="Jin Y."/>
            <person name="Johnson S."/>
            <person name="Lee J."/>
            <person name="Lewis L."/>
            <person name="Liao D."/>
            <person name="Mark M.R."/>
            <person name="Robbie E."/>
            <person name="Sanchez C."/>
            <person name="Schoenfeld J."/>
            <person name="Seshagiri S."/>
            <person name="Simmons L."/>
            <person name="Singh J."/>
            <person name="Smith V."/>
            <person name="Stinson J."/>
            <person name="Vagts A."/>
            <person name="Vandlen R.L."/>
            <person name="Watanabe C."/>
            <person name="Wieand D."/>
            <person name="Woods K."/>
            <person name="Xie M.-H."/>
            <person name="Yansura D.G."/>
            <person name="Yi S."/>
            <person name="Yu G."/>
            <person name="Yuan J."/>
            <person name="Zhang M."/>
            <person name="Zhang Z."/>
            <person name="Goddard A.D."/>
            <person name="Wood W.I."/>
            <person name="Godowski P.J."/>
            <person name="Gray A.M."/>
        </authorList>
    </citation>
    <scope>NUCLEOTIDE SEQUENCE [LARGE SCALE MRNA] (ISOFORM 2)</scope>
</reference>
<reference key="2">
    <citation type="journal article" date="2007" name="BMC Genomics">
        <title>The full-ORF clone resource of the German cDNA consortium.</title>
        <authorList>
            <person name="Bechtel S."/>
            <person name="Rosenfelder H."/>
            <person name="Duda A."/>
            <person name="Schmidt C.P."/>
            <person name="Ernst U."/>
            <person name="Wellenreuther R."/>
            <person name="Mehrle A."/>
            <person name="Schuster C."/>
            <person name="Bahr A."/>
            <person name="Bloecker H."/>
            <person name="Heubner D."/>
            <person name="Hoerlein A."/>
            <person name="Michel G."/>
            <person name="Wedler H."/>
            <person name="Koehrer K."/>
            <person name="Ottenwaelder B."/>
            <person name="Poustka A."/>
            <person name="Wiemann S."/>
            <person name="Schupp I."/>
        </authorList>
    </citation>
    <scope>NUCLEOTIDE SEQUENCE [LARGE SCALE MRNA] (ISOFORM 3)</scope>
    <source>
        <tissue>Fetal kidney</tissue>
    </source>
</reference>
<reference key="3">
    <citation type="journal article" date="2004" name="Genome Res.">
        <title>The status, quality, and expansion of the NIH full-length cDNA project: the Mammalian Gene Collection (MGC).</title>
        <authorList>
            <consortium name="The MGC Project Team"/>
        </authorList>
    </citation>
    <scope>NUCLEOTIDE SEQUENCE [LARGE SCALE MRNA] (ISOFORM 1)</scope>
    <source>
        <tissue>Testis</tissue>
    </source>
</reference>
<dbReference type="EMBL" id="AY358693">
    <property type="protein sequence ID" value="AAQ89056.1"/>
    <property type="molecule type" value="mRNA"/>
</dbReference>
<dbReference type="EMBL" id="BX648757">
    <property type="protein sequence ID" value="CAI56713.1"/>
    <property type="molecule type" value="mRNA"/>
</dbReference>
<dbReference type="EMBL" id="BC037287">
    <property type="protein sequence ID" value="AAH37287.1"/>
    <property type="molecule type" value="mRNA"/>
</dbReference>
<dbReference type="CCDS" id="CCDS4065.1">
    <molecule id="Q8NDZ6-1"/>
</dbReference>
<dbReference type="RefSeq" id="NP_699185.1">
    <molecule id="Q8NDZ6-1"/>
    <property type="nucleotide sequence ID" value="NM_153354.5"/>
</dbReference>
<dbReference type="BioGRID" id="127493">
    <property type="interactions" value="69"/>
</dbReference>
<dbReference type="FunCoup" id="Q8NDZ6">
    <property type="interactions" value="1069"/>
</dbReference>
<dbReference type="IntAct" id="Q8NDZ6">
    <property type="interactions" value="21"/>
</dbReference>
<dbReference type="STRING" id="9606.ENSP00000426354"/>
<dbReference type="GlyCosmos" id="Q8NDZ6">
    <property type="glycosylation" value="3 sites, No reported glycans"/>
</dbReference>
<dbReference type="GlyGen" id="Q8NDZ6">
    <property type="glycosylation" value="3 sites"/>
</dbReference>
<dbReference type="iPTMnet" id="Q8NDZ6"/>
<dbReference type="PhosphoSitePlus" id="Q8NDZ6"/>
<dbReference type="BioMuta" id="TMEM161B"/>
<dbReference type="DMDM" id="74730190"/>
<dbReference type="jPOST" id="Q8NDZ6"/>
<dbReference type="MassIVE" id="Q8NDZ6"/>
<dbReference type="PaxDb" id="9606-ENSP00000426354"/>
<dbReference type="PeptideAtlas" id="Q8NDZ6"/>
<dbReference type="ProteomicsDB" id="73102">
    <molecule id="Q8NDZ6-1"/>
</dbReference>
<dbReference type="ProteomicsDB" id="73103">
    <molecule id="Q8NDZ6-2"/>
</dbReference>
<dbReference type="ProteomicsDB" id="73104">
    <molecule id="Q8NDZ6-3"/>
</dbReference>
<dbReference type="Pumba" id="Q8NDZ6"/>
<dbReference type="Antibodypedia" id="50472">
    <property type="antibodies" value="72 antibodies from 15 providers"/>
</dbReference>
<dbReference type="DNASU" id="153396"/>
<dbReference type="Ensembl" id="ENST00000296595.11">
    <molecule id="Q8NDZ6-1"/>
    <property type="protein sequence ID" value="ENSP00000296595.6"/>
    <property type="gene ID" value="ENSG00000164180.14"/>
</dbReference>
<dbReference type="Ensembl" id="ENST00000510089.5">
    <molecule id="Q8NDZ6-3"/>
    <property type="protein sequence ID" value="ENSP00000423380.1"/>
    <property type="gene ID" value="ENSG00000164180.14"/>
</dbReference>
<dbReference type="GeneID" id="153396"/>
<dbReference type="KEGG" id="hsa:153396"/>
<dbReference type="MANE-Select" id="ENST00000296595.11">
    <property type="protein sequence ID" value="ENSP00000296595.6"/>
    <property type="RefSeq nucleotide sequence ID" value="NM_153354.5"/>
    <property type="RefSeq protein sequence ID" value="NP_699185.1"/>
</dbReference>
<dbReference type="UCSC" id="uc003kjc.5">
    <molecule id="Q8NDZ6-1"/>
    <property type="organism name" value="human"/>
</dbReference>
<dbReference type="AGR" id="HGNC:28483"/>
<dbReference type="CTD" id="153396"/>
<dbReference type="DisGeNET" id="153396"/>
<dbReference type="GeneCards" id="TMEM161B"/>
<dbReference type="HGNC" id="HGNC:28483">
    <property type="gene designation" value="TMEM161B"/>
</dbReference>
<dbReference type="HPA" id="ENSG00000164180">
    <property type="expression patterns" value="Low tissue specificity"/>
</dbReference>
<dbReference type="neXtProt" id="NX_Q8NDZ6"/>
<dbReference type="OpenTargets" id="ENSG00000164180"/>
<dbReference type="PharmGKB" id="PA145147987"/>
<dbReference type="VEuPathDB" id="HostDB:ENSG00000164180"/>
<dbReference type="eggNOG" id="KOG0017">
    <property type="taxonomic scope" value="Eukaryota"/>
</dbReference>
<dbReference type="eggNOG" id="KOG3978">
    <property type="taxonomic scope" value="Eukaryota"/>
</dbReference>
<dbReference type="GeneTree" id="ENSGT00390000000672"/>
<dbReference type="HOGENOM" id="CLU_027277_0_0_1"/>
<dbReference type="InParanoid" id="Q8NDZ6"/>
<dbReference type="OMA" id="RFALMPI"/>
<dbReference type="OrthoDB" id="784140at2759"/>
<dbReference type="PAN-GO" id="Q8NDZ6">
    <property type="GO annotations" value="0 GO annotations based on evolutionary models"/>
</dbReference>
<dbReference type="PhylomeDB" id="Q8NDZ6"/>
<dbReference type="TreeFam" id="TF314570"/>
<dbReference type="PathwayCommons" id="Q8NDZ6"/>
<dbReference type="SignaLink" id="Q8NDZ6"/>
<dbReference type="BioGRID-ORCS" id="153396">
    <property type="hits" value="21 hits in 1154 CRISPR screens"/>
</dbReference>
<dbReference type="ChiTaRS" id="TMEM161B">
    <property type="organism name" value="human"/>
</dbReference>
<dbReference type="GenomeRNAi" id="153396"/>
<dbReference type="Pharos" id="Q8NDZ6">
    <property type="development level" value="Tbio"/>
</dbReference>
<dbReference type="PRO" id="PR:Q8NDZ6"/>
<dbReference type="Proteomes" id="UP000005640">
    <property type="component" value="Chromosome 5"/>
</dbReference>
<dbReference type="RNAct" id="Q8NDZ6">
    <property type="molecule type" value="protein"/>
</dbReference>
<dbReference type="Bgee" id="ENSG00000164180">
    <property type="expression patterns" value="Expressed in epithelial cell of pancreas and 180 other cell types or tissues"/>
</dbReference>
<dbReference type="ExpressionAtlas" id="Q8NDZ6">
    <property type="expression patterns" value="baseline and differential"/>
</dbReference>
<dbReference type="GO" id="GO:0005886">
    <property type="term" value="C:plasma membrane"/>
    <property type="evidence" value="ECO:0000250"/>
    <property type="project" value="UniProtKB"/>
</dbReference>
<dbReference type="GO" id="GO:0098901">
    <property type="term" value="P:regulation of cardiac muscle cell action potential"/>
    <property type="evidence" value="ECO:0000250"/>
    <property type="project" value="UniProtKB"/>
</dbReference>
<dbReference type="GO" id="GO:0002027">
    <property type="term" value="P:regulation of heart rate"/>
    <property type="evidence" value="ECO:0000250"/>
    <property type="project" value="UniProtKB"/>
</dbReference>
<dbReference type="InterPro" id="IPR019395">
    <property type="entry name" value="Transmembrane_161A/B"/>
</dbReference>
<dbReference type="PANTHER" id="PTHR13624">
    <property type="entry name" value="RE42071P"/>
    <property type="match status" value="1"/>
</dbReference>
<dbReference type="PANTHER" id="PTHR13624:SF3">
    <property type="entry name" value="TRANSMEMBRANE PROTEIN 161B"/>
    <property type="match status" value="1"/>
</dbReference>
<dbReference type="Pfam" id="PF10268">
    <property type="entry name" value="Tmemb_161AB"/>
    <property type="match status" value="1"/>
</dbReference>
<organism>
    <name type="scientific">Homo sapiens</name>
    <name type="common">Human</name>
    <dbReference type="NCBI Taxonomy" id="9606"/>
    <lineage>
        <taxon>Eukaryota</taxon>
        <taxon>Metazoa</taxon>
        <taxon>Chordata</taxon>
        <taxon>Craniata</taxon>
        <taxon>Vertebrata</taxon>
        <taxon>Euteleostomi</taxon>
        <taxon>Mammalia</taxon>
        <taxon>Eutheria</taxon>
        <taxon>Euarchontoglires</taxon>
        <taxon>Primates</taxon>
        <taxon>Haplorrhini</taxon>
        <taxon>Catarrhini</taxon>
        <taxon>Hominidae</taxon>
        <taxon>Homo</taxon>
    </lineage>
</organism>
<proteinExistence type="evidence at protein level"/>
<keyword id="KW-0025">Alternative splicing</keyword>
<keyword id="KW-1003">Cell membrane</keyword>
<keyword id="KW-0325">Glycoprotein</keyword>
<keyword id="KW-0472">Membrane</keyword>
<keyword id="KW-1267">Proteomics identification</keyword>
<keyword id="KW-1185">Reference proteome</keyword>
<keyword id="KW-0812">Transmembrane</keyword>
<keyword id="KW-1133">Transmembrane helix</keyword>
<sequence>MGVIGIQLVVTMVMASVMQKIIPHYSLARWLLCNGSLRWYQHPTEEELRILAGKQQKGKTKKDRKYNGHIESKPLTIPKDIDLHLETKSVTEVDTLALHYFPEYQWLVDFTVAATVVYLVTEVYYNFMKPTQEMNISLVWCLLVLSFAIKVLFSLTTHYFKVEDGGERSVCVTFGFFFFVKAMAVLIVTENYLEFGLETGFTNFSDSAMQFLEKQGLESQSPVSKLTFKFFLAIFCSFIGAFLTFPGLRLAQMHLDALNLATEKITQTLLHINFLAPLFMVLLWVKPITKDYIMNPPLGKESIPLMTEATFDTLRLWLIILLCALRLAMMRSHLQAYLNLAQKCVDQMKKEAGRISTVELQKMVARVFYYLCVIALQYVAPLVMLLHTTLLLKTLGNHSWGIYPESISTLPVDNSLLSNSVYSELPSAEGKMKVTVTQITVALSSLKNIFTPLLFRGLLSFLTWWIAACLFSTSLFGLFYHQYLTVA</sequence>
<protein>
    <recommendedName>
        <fullName>Transmembrane protein 161B</fullName>
    </recommendedName>
</protein>
<feature type="chain" id="PRO_0000288089" description="Transmembrane protein 161B">
    <location>
        <begin position="1"/>
        <end position="487"/>
    </location>
</feature>
<feature type="transmembrane region" description="Helical" evidence="3">
    <location>
        <begin position="107"/>
        <end position="127"/>
    </location>
</feature>
<feature type="transmembrane region" description="Helical" evidence="3">
    <location>
        <begin position="136"/>
        <end position="156"/>
    </location>
</feature>
<feature type="transmembrane region" description="Helical" evidence="3">
    <location>
        <begin position="169"/>
        <end position="189"/>
    </location>
</feature>
<feature type="transmembrane region" description="Helical" evidence="3">
    <location>
        <begin position="228"/>
        <end position="248"/>
    </location>
</feature>
<feature type="transmembrane region" description="Helical" evidence="3">
    <location>
        <begin position="265"/>
        <end position="285"/>
    </location>
</feature>
<feature type="transmembrane region" description="Helical" evidence="3">
    <location>
        <begin position="305"/>
        <end position="325"/>
    </location>
</feature>
<feature type="transmembrane region" description="Helical" evidence="3">
    <location>
        <begin position="367"/>
        <end position="387"/>
    </location>
</feature>
<feature type="transmembrane region" description="Helical" evidence="3">
    <location>
        <begin position="459"/>
        <end position="479"/>
    </location>
</feature>
<feature type="glycosylation site" description="N-linked (GlcNAc...) asparagine" evidence="3">
    <location>
        <position position="34"/>
    </location>
</feature>
<feature type="glycosylation site" description="N-linked (GlcNAc...) asparagine" evidence="3">
    <location>
        <position position="135"/>
    </location>
</feature>
<feature type="glycosylation site" description="N-linked (GlcNAc...) asparagine" evidence="3">
    <location>
        <position position="203"/>
    </location>
</feature>
<feature type="splice variant" id="VSP_025647" description="In isoform 3." evidence="5">
    <location>
        <begin position="1"/>
        <end position="127"/>
    </location>
</feature>
<feature type="splice variant" id="VSP_025648" description="In isoform 3." evidence="5">
    <location>
        <begin position="268"/>
        <end position="487"/>
    </location>
</feature>
<feature type="splice variant" id="VSP_025649" description="In isoform 2." evidence="4">
    <original>SIPLMT</original>
    <variation>ISPSGR</variation>
    <location>
        <begin position="302"/>
        <end position="307"/>
    </location>
</feature>
<feature type="splice variant" id="VSP_025650" description="In isoform 2." evidence="4">
    <location>
        <begin position="308"/>
        <end position="487"/>
    </location>
</feature>
<name>T161B_HUMAN</name>
<accession>Q8NDZ6</accession>
<accession>Q5CZH7</accession>
<accession>Q6UWQ6</accession>
<comment type="function">
    <text evidence="2">Essential for maintaining normal cardiac rhythm in the developing heart and for neonatal survival (By similarity). Inhibits potassium and calcium currents in the cardiomyocytes, this assists in timely action potential repolarization and thereby maintains normal cardiac rhythm (By similarity).</text>
</comment>
<comment type="subcellular location">
    <subcellularLocation>
        <location evidence="1">Cell membrane</location>
        <topology evidence="3">Multi-pass membrane protein</topology>
    </subcellularLocation>
</comment>
<comment type="alternative products">
    <event type="alternative splicing"/>
    <isoform>
        <id>Q8NDZ6-1</id>
        <name>1</name>
        <sequence type="displayed"/>
    </isoform>
    <isoform>
        <id>Q8NDZ6-2</id>
        <name>2</name>
        <sequence type="described" ref="VSP_025649 VSP_025650"/>
    </isoform>
    <isoform>
        <id>Q8NDZ6-3</id>
        <name>3</name>
        <sequence type="described" ref="VSP_025647 VSP_025648"/>
    </isoform>
</comment>
<comment type="similarity">
    <text evidence="6">Belongs to the TMEM161 family.</text>
</comment>
<gene>
    <name type="primary">TMEM161B</name>
    <name type="ORF">UNQ679/PRO1313</name>
</gene>